<evidence type="ECO:0000250" key="1">
    <source>
        <dbReference type="UniProtKB" id="P00442"/>
    </source>
</evidence>
<evidence type="ECO:0000250" key="2">
    <source>
        <dbReference type="UniProtKB" id="P07505"/>
    </source>
</evidence>
<evidence type="ECO:0000250" key="3">
    <source>
        <dbReference type="UniProtKB" id="Q8L5E0"/>
    </source>
</evidence>
<evidence type="ECO:0000256" key="4">
    <source>
        <dbReference type="SAM" id="MobiDB-lite"/>
    </source>
</evidence>
<evidence type="ECO:0000269" key="5">
    <source>
    </source>
</evidence>
<evidence type="ECO:0000303" key="6">
    <source>
    </source>
</evidence>
<evidence type="ECO:0000305" key="7"/>
<evidence type="ECO:0000305" key="8">
    <source>
    </source>
</evidence>
<dbReference type="EC" id="1.15.1.1" evidence="5"/>
<dbReference type="RefSeq" id="XP_042390850.1">
    <property type="nucleotide sequence ID" value="XM_042534916.1"/>
</dbReference>
<dbReference type="RefSeq" id="XP_042390851.1">
    <property type="nucleotide sequence ID" value="XM_042534917.1"/>
</dbReference>
<dbReference type="RefSeq" id="XP_042395578.1">
    <property type="nucleotide sequence ID" value="XM_042539644.1"/>
</dbReference>
<dbReference type="RefSeq" id="XP_042395579.1">
    <property type="nucleotide sequence ID" value="XM_042539645.1"/>
</dbReference>
<dbReference type="SMR" id="C0HK70"/>
<dbReference type="GeneID" id="121982055"/>
<dbReference type="GeneID" id="121985924"/>
<dbReference type="OrthoDB" id="2015551at2759"/>
<dbReference type="GO" id="GO:0005737">
    <property type="term" value="C:cytoplasm"/>
    <property type="evidence" value="ECO:0007669"/>
    <property type="project" value="UniProtKB-SubCell"/>
</dbReference>
<dbReference type="GO" id="GO:0005507">
    <property type="term" value="F:copper ion binding"/>
    <property type="evidence" value="ECO:0007669"/>
    <property type="project" value="InterPro"/>
</dbReference>
<dbReference type="GO" id="GO:0004784">
    <property type="term" value="F:superoxide dismutase activity"/>
    <property type="evidence" value="ECO:0000314"/>
    <property type="project" value="UniProtKB"/>
</dbReference>
<dbReference type="CDD" id="cd00305">
    <property type="entry name" value="Cu-Zn_Superoxide_Dismutase"/>
    <property type="match status" value="1"/>
</dbReference>
<dbReference type="FunFam" id="2.60.40.200:FF:000001">
    <property type="entry name" value="Superoxide dismutase [Cu-Zn]"/>
    <property type="match status" value="1"/>
</dbReference>
<dbReference type="Gene3D" id="2.60.40.200">
    <property type="entry name" value="Superoxide dismutase, copper/zinc binding domain"/>
    <property type="match status" value="1"/>
</dbReference>
<dbReference type="InterPro" id="IPR036423">
    <property type="entry name" value="SOD-like_Cu/Zn_dom_sf"/>
</dbReference>
<dbReference type="InterPro" id="IPR024134">
    <property type="entry name" value="SOD_Cu/Zn_/chaperone"/>
</dbReference>
<dbReference type="InterPro" id="IPR018152">
    <property type="entry name" value="SOD_Cu/Zn_BS"/>
</dbReference>
<dbReference type="InterPro" id="IPR001424">
    <property type="entry name" value="SOD_Cu_Zn_dom"/>
</dbReference>
<dbReference type="PANTHER" id="PTHR10003">
    <property type="entry name" value="SUPEROXIDE DISMUTASE CU-ZN -RELATED"/>
    <property type="match status" value="1"/>
</dbReference>
<dbReference type="Pfam" id="PF00080">
    <property type="entry name" value="Sod_Cu"/>
    <property type="match status" value="1"/>
</dbReference>
<dbReference type="PRINTS" id="PR00068">
    <property type="entry name" value="CUZNDISMTASE"/>
</dbReference>
<dbReference type="SUPFAM" id="SSF49329">
    <property type="entry name" value="Cu,Zn superoxide dismutase-like"/>
    <property type="match status" value="1"/>
</dbReference>
<dbReference type="PROSITE" id="PS00087">
    <property type="entry name" value="SOD_CU_ZN_1"/>
    <property type="match status" value="1"/>
</dbReference>
<dbReference type="PROSITE" id="PS00332">
    <property type="entry name" value="SOD_CU_ZN_2"/>
    <property type="match status" value="1"/>
</dbReference>
<protein>
    <recommendedName>
        <fullName evidence="6">Superoxide dismutase [Cu-Zn]</fullName>
        <ecNumber evidence="5">1.15.1.1</ecNumber>
    </recommendedName>
</protein>
<reference evidence="7" key="1">
    <citation type="journal article" date="2017" name="Protein J.">
        <title>Complete amino acid sequence of a copper/zinc-superoxide dismutase from ginger rhizome.</title>
        <authorList>
            <person name="Nishiyama Y."/>
            <person name="Fukamizo T."/>
            <person name="Yoneda K."/>
            <person name="Araki T."/>
        </authorList>
    </citation>
    <scope>PROTEIN SEQUENCE OF 2-152</scope>
    <scope>CATALYTIC ACTIVITY</scope>
    <scope>BIOPHYSICOCHEMICAL PROPERTIES</scope>
    <scope>IDENTIFICATION BY MASS SPECTROMETRY</scope>
    <source>
        <tissue evidence="6">Rhizome</tissue>
    </source>
</reference>
<feature type="initiator methionine" description="Removed" evidence="8">
    <location>
        <position position="1"/>
    </location>
</feature>
<feature type="chain" id="PRO_0000438148" description="Superoxide dismutase [Cu-Zn]" evidence="5">
    <location>
        <begin position="2"/>
        <end position="152"/>
    </location>
</feature>
<feature type="region of interest" description="Disordered" evidence="4">
    <location>
        <begin position="61"/>
        <end position="87"/>
    </location>
</feature>
<feature type="compositionally biased region" description="Basic and acidic residues" evidence="4">
    <location>
        <begin position="67"/>
        <end position="81"/>
    </location>
</feature>
<feature type="binding site" evidence="2">
    <location>
        <position position="45"/>
    </location>
    <ligand>
        <name>Cu cation</name>
        <dbReference type="ChEBI" id="CHEBI:23378"/>
        <note>catalytic</note>
    </ligand>
</feature>
<feature type="binding site" evidence="2">
    <location>
        <position position="47"/>
    </location>
    <ligand>
        <name>Cu cation</name>
        <dbReference type="ChEBI" id="CHEBI:23378"/>
        <note>catalytic</note>
    </ligand>
</feature>
<feature type="binding site" evidence="2">
    <location>
        <position position="62"/>
    </location>
    <ligand>
        <name>Cu cation</name>
        <dbReference type="ChEBI" id="CHEBI:23378"/>
        <note>catalytic</note>
    </ligand>
</feature>
<feature type="binding site" evidence="2">
    <location>
        <position position="62"/>
    </location>
    <ligand>
        <name>Zn(2+)</name>
        <dbReference type="ChEBI" id="CHEBI:29105"/>
        <note>structural</note>
    </ligand>
</feature>
<feature type="binding site" evidence="2">
    <location>
        <position position="70"/>
    </location>
    <ligand>
        <name>Zn(2+)</name>
        <dbReference type="ChEBI" id="CHEBI:29105"/>
        <note>structural</note>
    </ligand>
</feature>
<feature type="binding site" evidence="2">
    <location>
        <position position="79"/>
    </location>
    <ligand>
        <name>Zn(2+)</name>
        <dbReference type="ChEBI" id="CHEBI:29105"/>
        <note>structural</note>
    </ligand>
</feature>
<feature type="binding site" evidence="2">
    <location>
        <position position="82"/>
    </location>
    <ligand>
        <name>Zn(2+)</name>
        <dbReference type="ChEBI" id="CHEBI:29105"/>
        <note>structural</note>
    </ligand>
</feature>
<feature type="binding site" evidence="2">
    <location>
        <position position="119"/>
    </location>
    <ligand>
        <name>Cu cation</name>
        <dbReference type="ChEBI" id="CHEBI:23378"/>
        <note>catalytic</note>
    </ligand>
</feature>
<comment type="function">
    <text evidence="1">Destroys radicals which are normally produced within the cells and which are toxic to biological systems.</text>
</comment>
<comment type="catalytic activity">
    <reaction evidence="5">
        <text>2 superoxide + 2 H(+) = H2O2 + O2</text>
        <dbReference type="Rhea" id="RHEA:20696"/>
        <dbReference type="ChEBI" id="CHEBI:15378"/>
        <dbReference type="ChEBI" id="CHEBI:15379"/>
        <dbReference type="ChEBI" id="CHEBI:16240"/>
        <dbReference type="ChEBI" id="CHEBI:18421"/>
        <dbReference type="EC" id="1.15.1.1"/>
    </reaction>
</comment>
<comment type="cofactor">
    <cofactor evidence="2">
        <name>Cu cation</name>
        <dbReference type="ChEBI" id="CHEBI:23378"/>
    </cofactor>
    <text evidence="2">Binds 1 copper ion per subunit.</text>
</comment>
<comment type="cofactor">
    <cofactor evidence="2">
        <name>Zn(2+)</name>
        <dbReference type="ChEBI" id="CHEBI:29105"/>
    </cofactor>
    <text evidence="2">Binds 1 zinc ion per subunit.</text>
</comment>
<comment type="biophysicochemical properties">
    <phDependence>
        <text evidence="5">Active between pH 5 and 10.</text>
    </phDependence>
    <temperatureDependence>
        <text evidence="5">Active between 10 and 60 degrees Celsius.</text>
    </temperatureDependence>
</comment>
<comment type="subunit">
    <text evidence="7">Homodimer (Probable).</text>
</comment>
<comment type="subcellular location">
    <subcellularLocation>
        <location evidence="3">Cytoplasm</location>
    </subcellularLocation>
</comment>
<comment type="similarity">
    <text evidence="7">Belongs to the Cu-Zn superoxide dismutase family.</text>
</comment>
<proteinExistence type="evidence at protein level"/>
<sequence length="152" mass="15127">MVKAVAVLGSSEGVKGTIYFVQEGDGPTTVTGSITGLKPGLHGFHVHALGDTTNGCMSTGPHFNPAGKEHGAPEDENRHAGDLGNATAGEDGIVTVSVVDSQIPLSGPNSIIGRAVVVHADPDDLGKGGHELSKTTGNAGGRVACGIIGLQG</sequence>
<keyword id="KW-0049">Antioxidant</keyword>
<keyword id="KW-0186">Copper</keyword>
<keyword id="KW-0963">Cytoplasm</keyword>
<keyword id="KW-0903">Direct protein sequencing</keyword>
<keyword id="KW-0479">Metal-binding</keyword>
<keyword id="KW-0560">Oxidoreductase</keyword>
<keyword id="KW-0862">Zinc</keyword>
<accession>C0HK70</accession>
<name>SODC_ZINOF</name>
<organism evidence="6">
    <name type="scientific">Zingiber officinale</name>
    <name type="common">Ginger</name>
    <name type="synonym">Amomum zingiber</name>
    <dbReference type="NCBI Taxonomy" id="94328"/>
    <lineage>
        <taxon>Eukaryota</taxon>
        <taxon>Viridiplantae</taxon>
        <taxon>Streptophyta</taxon>
        <taxon>Embryophyta</taxon>
        <taxon>Tracheophyta</taxon>
        <taxon>Spermatophyta</taxon>
        <taxon>Magnoliopsida</taxon>
        <taxon>Liliopsida</taxon>
        <taxon>Zingiberales</taxon>
        <taxon>Zingiberaceae</taxon>
        <taxon>Zingiber</taxon>
    </lineage>
</organism>